<accession>Q2YPM3</accession>
<keyword id="KW-0067">ATP-binding</keyword>
<keyword id="KW-0963">Cytoplasm</keyword>
<keyword id="KW-0227">DNA damage</keyword>
<keyword id="KW-0234">DNA repair</keyword>
<keyword id="KW-0235">DNA replication</keyword>
<keyword id="KW-0238">DNA-binding</keyword>
<keyword id="KW-0547">Nucleotide-binding</keyword>
<keyword id="KW-1185">Reference proteome</keyword>
<keyword id="KW-0742">SOS response</keyword>
<reference key="1">
    <citation type="journal article" date="2005" name="Infect. Immun.">
        <title>Whole-genome analyses of speciation events in pathogenic Brucellae.</title>
        <authorList>
            <person name="Chain P.S."/>
            <person name="Comerci D.J."/>
            <person name="Tolmasky M.E."/>
            <person name="Larimer F.W."/>
            <person name="Malfatti S.A."/>
            <person name="Vergez L.M."/>
            <person name="Aguero F."/>
            <person name="Land M.L."/>
            <person name="Ugalde R.A."/>
            <person name="Garcia E."/>
        </authorList>
    </citation>
    <scope>NUCLEOTIDE SEQUENCE [LARGE SCALE GENOMIC DNA]</scope>
    <source>
        <strain>2308</strain>
    </source>
</reference>
<organism>
    <name type="scientific">Brucella abortus (strain 2308)</name>
    <dbReference type="NCBI Taxonomy" id="359391"/>
    <lineage>
        <taxon>Bacteria</taxon>
        <taxon>Pseudomonadati</taxon>
        <taxon>Pseudomonadota</taxon>
        <taxon>Alphaproteobacteria</taxon>
        <taxon>Hyphomicrobiales</taxon>
        <taxon>Brucellaceae</taxon>
        <taxon>Brucella/Ochrobactrum group</taxon>
        <taxon>Brucella</taxon>
    </lineage>
</organism>
<gene>
    <name evidence="1" type="primary">recF</name>
    <name type="ordered locus">BAB1_0003</name>
</gene>
<proteinExistence type="inferred from homology"/>
<comment type="function">
    <text evidence="1">The RecF protein is involved in DNA metabolism; it is required for DNA replication and normal SOS inducibility. RecF binds preferentially to single-stranded, linear DNA. It also seems to bind ATP.</text>
</comment>
<comment type="subcellular location">
    <subcellularLocation>
        <location evidence="1">Cytoplasm</location>
    </subcellularLocation>
</comment>
<comment type="similarity">
    <text evidence="1">Belongs to the RecF family.</text>
</comment>
<evidence type="ECO:0000255" key="1">
    <source>
        <dbReference type="HAMAP-Rule" id="MF_00365"/>
    </source>
</evidence>
<protein>
    <recommendedName>
        <fullName evidence="1">DNA replication and repair protein RecF</fullName>
    </recommendedName>
</protein>
<feature type="chain" id="PRO_0000236113" description="DNA replication and repair protein RecF">
    <location>
        <begin position="1"/>
        <end position="384"/>
    </location>
</feature>
<feature type="binding site" evidence="1">
    <location>
        <begin position="43"/>
        <end position="50"/>
    </location>
    <ligand>
        <name>ATP</name>
        <dbReference type="ChEBI" id="CHEBI:30616"/>
    </ligand>
</feature>
<sequence length="384" mass="41494">MEAKDHIERRPDRVSIRRLKLVNFRNYAELSLPLGPGHVVLTGENGSGKTNLIEAISFLSPGRGLRRAAYDDVARANAEGGFAIHAALDCMIYGDAEIGTGTAGGGEGGRKVRINRIAASADDLLDYARILWVVPSMDGLFTGGASDRRRFLDRMVLAIDTAHGKRVLDYEKAMRSRNRLLNDGSNDDQWLDAIENQMAELGTAIAAARAQAMRLIAAMIERLPAEGPFPKADCFLEGALESRIGVEAALDLEEDFRRTLRDGRARDRAAGRTLDGPHRTDLIVQHRPKSMPAALCSTGEQKALLIGLILAHARLTAELSGMAPILLLDEIAAHLDMGRRAALFGILDELGGQAFMTGTDRALFDALAGDAQFFNVSAGQLTGI</sequence>
<name>RECF_BRUA2</name>
<dbReference type="EMBL" id="AM040264">
    <property type="protein sequence ID" value="CAJ09959.1"/>
    <property type="molecule type" value="Genomic_DNA"/>
</dbReference>
<dbReference type="RefSeq" id="WP_002965250.1">
    <property type="nucleotide sequence ID" value="NZ_KN046823.1"/>
</dbReference>
<dbReference type="SMR" id="Q2YPM3"/>
<dbReference type="STRING" id="359391.BAB1_0003"/>
<dbReference type="GeneID" id="93017511"/>
<dbReference type="KEGG" id="bmf:BAB1_0003"/>
<dbReference type="PATRIC" id="fig|359391.11.peg.1428"/>
<dbReference type="HOGENOM" id="CLU_040267_2_0_5"/>
<dbReference type="PhylomeDB" id="Q2YPM3"/>
<dbReference type="Proteomes" id="UP000002719">
    <property type="component" value="Chromosome I"/>
</dbReference>
<dbReference type="GO" id="GO:0005737">
    <property type="term" value="C:cytoplasm"/>
    <property type="evidence" value="ECO:0007669"/>
    <property type="project" value="UniProtKB-SubCell"/>
</dbReference>
<dbReference type="GO" id="GO:0005524">
    <property type="term" value="F:ATP binding"/>
    <property type="evidence" value="ECO:0007669"/>
    <property type="project" value="UniProtKB-UniRule"/>
</dbReference>
<dbReference type="GO" id="GO:0016887">
    <property type="term" value="F:ATP hydrolysis activity"/>
    <property type="evidence" value="ECO:0007669"/>
    <property type="project" value="InterPro"/>
</dbReference>
<dbReference type="GO" id="GO:0003697">
    <property type="term" value="F:single-stranded DNA binding"/>
    <property type="evidence" value="ECO:0007669"/>
    <property type="project" value="UniProtKB-UniRule"/>
</dbReference>
<dbReference type="GO" id="GO:0006260">
    <property type="term" value="P:DNA replication"/>
    <property type="evidence" value="ECO:0007669"/>
    <property type="project" value="UniProtKB-UniRule"/>
</dbReference>
<dbReference type="GO" id="GO:0000731">
    <property type="term" value="P:DNA synthesis involved in DNA repair"/>
    <property type="evidence" value="ECO:0007669"/>
    <property type="project" value="TreeGrafter"/>
</dbReference>
<dbReference type="GO" id="GO:0006302">
    <property type="term" value="P:double-strand break repair"/>
    <property type="evidence" value="ECO:0007669"/>
    <property type="project" value="TreeGrafter"/>
</dbReference>
<dbReference type="GO" id="GO:0009432">
    <property type="term" value="P:SOS response"/>
    <property type="evidence" value="ECO:0007669"/>
    <property type="project" value="UniProtKB-UniRule"/>
</dbReference>
<dbReference type="CDD" id="cd03242">
    <property type="entry name" value="ABC_RecF"/>
    <property type="match status" value="1"/>
</dbReference>
<dbReference type="Gene3D" id="3.40.50.300">
    <property type="entry name" value="P-loop containing nucleotide triphosphate hydrolases"/>
    <property type="match status" value="1"/>
</dbReference>
<dbReference type="Gene3D" id="1.20.1050.90">
    <property type="entry name" value="RecF/RecN/SMC, N-terminal domain"/>
    <property type="match status" value="1"/>
</dbReference>
<dbReference type="HAMAP" id="MF_00365">
    <property type="entry name" value="RecF"/>
    <property type="match status" value="1"/>
</dbReference>
<dbReference type="InterPro" id="IPR003593">
    <property type="entry name" value="AAA+_ATPase"/>
</dbReference>
<dbReference type="InterPro" id="IPR001238">
    <property type="entry name" value="DNA-binding_RecF"/>
</dbReference>
<dbReference type="InterPro" id="IPR018078">
    <property type="entry name" value="DNA-binding_RecF_CS"/>
</dbReference>
<dbReference type="InterPro" id="IPR027417">
    <property type="entry name" value="P-loop_NTPase"/>
</dbReference>
<dbReference type="InterPro" id="IPR003395">
    <property type="entry name" value="RecF/RecN/SMC_N"/>
</dbReference>
<dbReference type="InterPro" id="IPR042174">
    <property type="entry name" value="RecF_2"/>
</dbReference>
<dbReference type="NCBIfam" id="TIGR00611">
    <property type="entry name" value="recf"/>
    <property type="match status" value="1"/>
</dbReference>
<dbReference type="PANTHER" id="PTHR32182">
    <property type="entry name" value="DNA REPLICATION AND REPAIR PROTEIN RECF"/>
    <property type="match status" value="1"/>
</dbReference>
<dbReference type="PANTHER" id="PTHR32182:SF0">
    <property type="entry name" value="DNA REPLICATION AND REPAIR PROTEIN RECF"/>
    <property type="match status" value="1"/>
</dbReference>
<dbReference type="Pfam" id="PF02463">
    <property type="entry name" value="SMC_N"/>
    <property type="match status" value="1"/>
</dbReference>
<dbReference type="SMART" id="SM00382">
    <property type="entry name" value="AAA"/>
    <property type="match status" value="1"/>
</dbReference>
<dbReference type="SUPFAM" id="SSF52540">
    <property type="entry name" value="P-loop containing nucleoside triphosphate hydrolases"/>
    <property type="match status" value="1"/>
</dbReference>
<dbReference type="PROSITE" id="PS00617">
    <property type="entry name" value="RECF_1"/>
    <property type="match status" value="1"/>
</dbReference>
<dbReference type="PROSITE" id="PS00618">
    <property type="entry name" value="RECF_2"/>
    <property type="match status" value="1"/>
</dbReference>